<protein>
    <recommendedName>
        <fullName evidence="6">AP2-like ethylene-responsive transcription factor AIL7</fullName>
    </recommendedName>
    <alternativeName>
        <fullName evidence="6">Protein AINTEGUMENTA-LIKE 7</fullName>
    </alternativeName>
    <alternativeName>
        <fullName>Protein PLETHORA 7</fullName>
    </alternativeName>
</protein>
<name>AIL7_ARATH</name>
<feature type="chain" id="PRO_0000290367" description="AP2-like ethylene-responsive transcription factor AIL7">
    <location>
        <begin position="1"/>
        <end position="498"/>
    </location>
</feature>
<feature type="DNA-binding region" description="AP2/ERF 1" evidence="2">
    <location>
        <begin position="231"/>
        <end position="297"/>
    </location>
</feature>
<feature type="DNA-binding region" description="AP2/ERF 2" evidence="2">
    <location>
        <begin position="333"/>
        <end position="391"/>
    </location>
</feature>
<feature type="region of interest" description="Disordered" evidence="3">
    <location>
        <begin position="186"/>
        <end position="220"/>
    </location>
</feature>
<feature type="region of interest" description="Disordered" evidence="3">
    <location>
        <begin position="422"/>
        <end position="452"/>
    </location>
</feature>
<feature type="compositionally biased region" description="Polar residues" evidence="3">
    <location>
        <begin position="186"/>
        <end position="195"/>
    </location>
</feature>
<feature type="compositionally biased region" description="Basic and acidic residues" evidence="3">
    <location>
        <begin position="209"/>
        <end position="220"/>
    </location>
</feature>
<feature type="compositionally biased region" description="Low complexity" evidence="3">
    <location>
        <begin position="422"/>
        <end position="451"/>
    </location>
</feature>
<organism>
    <name type="scientific">Arabidopsis thaliana</name>
    <name type="common">Mouse-ear cress</name>
    <dbReference type="NCBI Taxonomy" id="3702"/>
    <lineage>
        <taxon>Eukaryota</taxon>
        <taxon>Viridiplantae</taxon>
        <taxon>Streptophyta</taxon>
        <taxon>Embryophyta</taxon>
        <taxon>Tracheophyta</taxon>
        <taxon>Spermatophyta</taxon>
        <taxon>Magnoliopsida</taxon>
        <taxon>eudicotyledons</taxon>
        <taxon>Gunneridae</taxon>
        <taxon>Pentapetalae</taxon>
        <taxon>rosids</taxon>
        <taxon>malvids</taxon>
        <taxon>Brassicales</taxon>
        <taxon>Brassicaceae</taxon>
        <taxon>Camelineae</taxon>
        <taxon>Arabidopsis</taxon>
    </lineage>
</organism>
<proteinExistence type="evidence at protein level"/>
<comment type="function">
    <text evidence="1">Probably acts as a transcriptional activator. Binds to the GCC-box pathogenesis-related promoter element. May be involved in the regulation of gene expression by stress factors and by components of stress signal transduction pathways.</text>
</comment>
<comment type="subunit">
    <text evidence="5">Interacts with HDG2, and possibly with HDG3, HDG7, ANL2, ATML1 and PDF2.</text>
</comment>
<comment type="subcellular location">
    <subcellularLocation>
        <location evidence="7">Nucleus</location>
    </subcellularLocation>
</comment>
<comment type="tissue specificity">
    <text evidence="4">Expressed in roots, seedlings, inflorescence, and siliques. Also detected at low levels in leaves.</text>
</comment>
<comment type="developmental stage">
    <text evidence="4">Confined to the central region of inflorescence ane floral meristems, progressively restricted to the innermost cells of the dome. Also detected in developing stamen locules and later in sporogonous cells within locules. In carpel primordia, found in placenta and in young ovule primordia.</text>
</comment>
<comment type="similarity">
    <text evidence="7">Belongs to the AP2/ERF transcription factor family. AP2 subfamily.</text>
</comment>
<comment type="sequence caution" evidence="7">
    <conflict type="erroneous gene model prediction">
        <sequence resource="EMBL-CDS" id="BAA98170"/>
    </conflict>
</comment>
<sequence length="498" mass="55448">MAPPMTNCLTFSLSPMEMLKSTDQSHFSSSYDDSSTPYLIDNFYAFKEEAEIEAAAASMADSTTLSTFFDHSQTQIPKLEDFLGDSFVRYSDNQTETQDSSSLTPFYDPRHRTVAEGVTGFFSDHHQPDFKTINSGPEIFDDSTTSNIGGTHLSSHVVESSTTAKLGFNGDCTTTGGVLSLGVNNTSDQPLSCNNGERGGNSNKKKTVSKKETSDDSKKKIVETLGQRTSIYRGVTRHRWTGRYEAHLWDNSCRREGQARKGRQVYLGGYDKEDRAARAYDLAALKYWGSTATTNFPVSSYSKELEEMNHMTKQEFIASLRRKSSGFSRGASIYRGVTRHHQQGRWQARIGRVAGNKDLYLGTFATEEEAAEAYDIAAIKFRGINAVTNFEMNRYDIEAVMNSSLPVGGAAAKRHKLKLALESPSSSSSDHNLQQQQLLPSSSPSDQNPNSIPCGIPFEPSVLYYHQNFFQHYPLVSDSTIQAPMNQAEFFLWPNQSY</sequence>
<keyword id="KW-0010">Activator</keyword>
<keyword id="KW-0238">DNA-binding</keyword>
<keyword id="KW-0936">Ethylene signaling pathway</keyword>
<keyword id="KW-0539">Nucleus</keyword>
<keyword id="KW-1185">Reference proteome</keyword>
<keyword id="KW-0677">Repeat</keyword>
<keyword id="KW-0804">Transcription</keyword>
<keyword id="KW-0805">Transcription regulation</keyword>
<reference key="1">
    <citation type="submission" date="1999-04" db="EMBL/GenBank/DDBJ databases">
        <title>Structural analysis of Arabidopsis thaliana chromosome 5. XI.</title>
        <authorList>
            <person name="Kaneko T."/>
            <person name="Katoh T."/>
            <person name="Asamizu E."/>
            <person name="Sato S."/>
            <person name="Nakamura Y."/>
            <person name="Kotani H."/>
            <person name="Tabata S."/>
        </authorList>
    </citation>
    <scope>NUCLEOTIDE SEQUENCE [LARGE SCALE GENOMIC DNA]</scope>
    <source>
        <strain>cv. Columbia</strain>
    </source>
</reference>
<reference key="2">
    <citation type="journal article" date="2017" name="Plant J.">
        <title>Araport11: a complete reannotation of the Arabidopsis thaliana reference genome.</title>
        <authorList>
            <person name="Cheng C.Y."/>
            <person name="Krishnakumar V."/>
            <person name="Chan A.P."/>
            <person name="Thibaud-Nissen F."/>
            <person name="Schobel S."/>
            <person name="Town C.D."/>
        </authorList>
    </citation>
    <scope>GENOME REANNOTATION</scope>
    <source>
        <strain>cv. Columbia</strain>
    </source>
</reference>
<reference key="3">
    <citation type="submission" date="2004-02" db="EMBL/GenBank/DDBJ databases">
        <title>Molecular cloning, expression, phylogenetic and functional characterization of the Arabidopsis AP2/EREBP transcription factor family.</title>
        <authorList>
            <person name="Pan Y."/>
            <person name="Gong W."/>
            <person name="Liu D."/>
            <person name="Fu Q."/>
            <person name="Mei W.-Q."/>
            <person name="Song W.-Q."/>
            <person name="Ma L.-G."/>
            <person name="Luo J.-C."/>
            <person name="Deng X.-W."/>
            <person name="Zhu Y.-X."/>
        </authorList>
    </citation>
    <scope>NUCLEOTIDE SEQUENCE [MRNA] OF 59-498</scope>
</reference>
<reference key="4">
    <citation type="journal article" date="2005" name="Plant Mol. Biol.">
        <title>AINTEGUMENTA-like (AIL) genes are expressed in young tissues and may specify meristematic or division-competent states.</title>
        <authorList>
            <person name="Nole-Wilson S."/>
            <person name="Tranby T.L."/>
            <person name="Krizek B.A."/>
        </authorList>
    </citation>
    <scope>TISSUE SPECIFICITY</scope>
    <scope>DEVELOPMENTAL STAGE</scope>
</reference>
<reference key="5">
    <citation type="journal article" date="2006" name="Plant Physiol.">
        <title>Genome-wide analysis of the ERF gene family in Arabidopsis and rice.</title>
        <authorList>
            <person name="Nakano T."/>
            <person name="Suzuki K."/>
            <person name="Fujimura T."/>
            <person name="Shinshi H."/>
        </authorList>
    </citation>
    <scope>GENE FAMILY</scope>
    <scope>NOMENCLATURE</scope>
</reference>
<reference key="6">
    <citation type="journal article" date="2015" name="Development">
        <title>AIL and HDG proteins act antagonistically to control cell proliferation.</title>
        <authorList>
            <person name="Horstman A."/>
            <person name="Fukuoka H."/>
            <person name="Muino J.M."/>
            <person name="Nitsch L."/>
            <person name="Guo C."/>
            <person name="Passarinho P."/>
            <person name="Sanchez-Perez G."/>
            <person name="Immink R."/>
            <person name="Angenent G."/>
            <person name="Boutilier K."/>
        </authorList>
    </citation>
    <scope>INTERACTION WITH HDG2; HDG3; HDG7; ANL2; ATML1 AND PDF2</scope>
    <source>
        <strain>cv. Columbia</strain>
    </source>
</reference>
<dbReference type="EMBL" id="AB026639">
    <property type="protein sequence ID" value="BAA98170.1"/>
    <property type="status" value="ALT_SEQ"/>
    <property type="molecule type" value="Genomic_DNA"/>
</dbReference>
<dbReference type="EMBL" id="CP002688">
    <property type="protein sequence ID" value="AED98065.1"/>
    <property type="molecule type" value="Genomic_DNA"/>
</dbReference>
<dbReference type="EMBL" id="CP002688">
    <property type="protein sequence ID" value="ANM68518.1"/>
    <property type="molecule type" value="Genomic_DNA"/>
</dbReference>
<dbReference type="EMBL" id="AY560887">
    <property type="protein sequence ID" value="AAT44954.1"/>
    <property type="molecule type" value="mRNA"/>
</dbReference>
<dbReference type="RefSeq" id="NP_001318882.1">
    <property type="nucleotide sequence ID" value="NM_001345694.1"/>
</dbReference>
<dbReference type="RefSeq" id="NP_001330268.1">
    <property type="nucleotide sequence ID" value="NM_001345696.1"/>
</dbReference>
<dbReference type="RefSeq" id="NP_201354.5">
    <property type="nucleotide sequence ID" value="NM_125949.7"/>
</dbReference>
<dbReference type="SMR" id="Q6J9N8"/>
<dbReference type="STRING" id="3702.Q6J9N8"/>
<dbReference type="PaxDb" id="3702-AT5G65510.1"/>
<dbReference type="ProteomicsDB" id="244665"/>
<dbReference type="EnsemblPlants" id="AT5G65510.1">
    <property type="protein sequence ID" value="AT5G65510.1"/>
    <property type="gene ID" value="AT5G65510"/>
</dbReference>
<dbReference type="EnsemblPlants" id="AT5G65510.2">
    <property type="protein sequence ID" value="AT5G65510.2"/>
    <property type="gene ID" value="AT5G65510"/>
</dbReference>
<dbReference type="GeneID" id="836677"/>
<dbReference type="Gramene" id="AT5G65510.1">
    <property type="protein sequence ID" value="AT5G65510.1"/>
    <property type="gene ID" value="AT5G65510"/>
</dbReference>
<dbReference type="Gramene" id="AT5G65510.2">
    <property type="protein sequence ID" value="AT5G65510.2"/>
    <property type="gene ID" value="AT5G65510"/>
</dbReference>
<dbReference type="KEGG" id="ath:AT5G65510"/>
<dbReference type="Araport" id="AT5G65510"/>
<dbReference type="TAIR" id="AT5G65510">
    <property type="gene designation" value="AIL7"/>
</dbReference>
<dbReference type="eggNOG" id="ENOG502QWA0">
    <property type="taxonomic scope" value="Eukaryota"/>
</dbReference>
<dbReference type="HOGENOM" id="CLU_013549_4_0_1"/>
<dbReference type="InParanoid" id="Q6J9N8"/>
<dbReference type="OMA" id="PTDDHNI"/>
<dbReference type="OrthoDB" id="207175at2759"/>
<dbReference type="PRO" id="PR:Q6J9N8"/>
<dbReference type="Proteomes" id="UP000006548">
    <property type="component" value="Chromosome 5"/>
</dbReference>
<dbReference type="ExpressionAtlas" id="Q6J9N8">
    <property type="expression patterns" value="baseline and differential"/>
</dbReference>
<dbReference type="GO" id="GO:0005634">
    <property type="term" value="C:nucleus"/>
    <property type="evidence" value="ECO:0007669"/>
    <property type="project" value="UniProtKB-SubCell"/>
</dbReference>
<dbReference type="GO" id="GO:0003677">
    <property type="term" value="F:DNA binding"/>
    <property type="evidence" value="ECO:0007669"/>
    <property type="project" value="UniProtKB-KW"/>
</dbReference>
<dbReference type="GO" id="GO:0003700">
    <property type="term" value="F:DNA-binding transcription factor activity"/>
    <property type="evidence" value="ECO:0000250"/>
    <property type="project" value="TAIR"/>
</dbReference>
<dbReference type="GO" id="GO:1990110">
    <property type="term" value="P:callus formation"/>
    <property type="evidence" value="ECO:0000316"/>
    <property type="project" value="TAIR"/>
</dbReference>
<dbReference type="GO" id="GO:0009873">
    <property type="term" value="P:ethylene-activated signaling pathway"/>
    <property type="evidence" value="ECO:0007669"/>
    <property type="project" value="UniProtKB-KW"/>
</dbReference>
<dbReference type="GO" id="GO:0010311">
    <property type="term" value="P:lateral root formation"/>
    <property type="evidence" value="ECO:0000316"/>
    <property type="project" value="TAIR"/>
</dbReference>
<dbReference type="GO" id="GO:0060772">
    <property type="term" value="P:leaf phyllotactic patterning"/>
    <property type="evidence" value="ECO:0000316"/>
    <property type="project" value="TAIR"/>
</dbReference>
<dbReference type="GO" id="GO:0010492">
    <property type="term" value="P:maintenance of shoot apical meristem identity"/>
    <property type="evidence" value="ECO:0000316"/>
    <property type="project" value="TAIR"/>
</dbReference>
<dbReference type="GO" id="GO:0060771">
    <property type="term" value="P:phyllotactic patterning"/>
    <property type="evidence" value="ECO:0000316"/>
    <property type="project" value="TAIR"/>
</dbReference>
<dbReference type="CDD" id="cd00018">
    <property type="entry name" value="AP2"/>
    <property type="match status" value="2"/>
</dbReference>
<dbReference type="FunFam" id="3.30.730.10:FF:000002">
    <property type="entry name" value="AP2-like ethylene-responsive transcription factor"/>
    <property type="match status" value="1"/>
</dbReference>
<dbReference type="FunFam" id="3.30.730.10:FF:000003">
    <property type="entry name" value="AP2-like ethylene-responsive transcription factor ANT"/>
    <property type="match status" value="1"/>
</dbReference>
<dbReference type="Gene3D" id="3.30.730.10">
    <property type="entry name" value="AP2/ERF domain"/>
    <property type="match status" value="2"/>
</dbReference>
<dbReference type="InterPro" id="IPR001471">
    <property type="entry name" value="AP2/ERF_dom"/>
</dbReference>
<dbReference type="InterPro" id="IPR036955">
    <property type="entry name" value="AP2/ERF_dom_sf"/>
</dbReference>
<dbReference type="InterPro" id="IPR016177">
    <property type="entry name" value="DNA-bd_dom_sf"/>
</dbReference>
<dbReference type="PANTHER" id="PTHR32467">
    <property type="entry name" value="AP2-LIKE ETHYLENE-RESPONSIVE TRANSCRIPTION FACTOR"/>
    <property type="match status" value="1"/>
</dbReference>
<dbReference type="PANTHER" id="PTHR32467:SF222">
    <property type="entry name" value="AP2-LIKE ETHYLENE-RESPONSIVE TRANSCRIPTION FACTOR AIL7"/>
    <property type="match status" value="1"/>
</dbReference>
<dbReference type="Pfam" id="PF00847">
    <property type="entry name" value="AP2"/>
    <property type="match status" value="2"/>
</dbReference>
<dbReference type="PRINTS" id="PR00367">
    <property type="entry name" value="ETHRSPELEMNT"/>
</dbReference>
<dbReference type="SMART" id="SM00380">
    <property type="entry name" value="AP2"/>
    <property type="match status" value="2"/>
</dbReference>
<dbReference type="SUPFAM" id="SSF54171">
    <property type="entry name" value="DNA-binding domain"/>
    <property type="match status" value="2"/>
</dbReference>
<dbReference type="PROSITE" id="PS51032">
    <property type="entry name" value="AP2_ERF"/>
    <property type="match status" value="2"/>
</dbReference>
<gene>
    <name evidence="6" type="primary">AIL7</name>
    <name type="synonym">PLT7</name>
    <name evidence="8" type="ordered locus">At5g65510</name>
    <name evidence="9" type="ORF">K21L13.1</name>
</gene>
<accession>Q6J9N8</accession>
<accession>Q9LSM4</accession>
<evidence type="ECO:0000250" key="1">
    <source>
        <dbReference type="UniProtKB" id="Q9LND1"/>
    </source>
</evidence>
<evidence type="ECO:0000255" key="2">
    <source>
        <dbReference type="PROSITE-ProRule" id="PRU00366"/>
    </source>
</evidence>
<evidence type="ECO:0000256" key="3">
    <source>
        <dbReference type="SAM" id="MobiDB-lite"/>
    </source>
</evidence>
<evidence type="ECO:0000269" key="4">
    <source>
    </source>
</evidence>
<evidence type="ECO:0000269" key="5">
    <source>
    </source>
</evidence>
<evidence type="ECO:0000303" key="6">
    <source>
    </source>
</evidence>
<evidence type="ECO:0000305" key="7"/>
<evidence type="ECO:0000312" key="8">
    <source>
        <dbReference type="Araport" id="AT5G65510"/>
    </source>
</evidence>
<evidence type="ECO:0000312" key="9">
    <source>
        <dbReference type="EMBL" id="BAA98170.1"/>
    </source>
</evidence>